<feature type="chain" id="PRO_1000049194" description="Homoserine kinase">
    <location>
        <begin position="1"/>
        <end position="300"/>
    </location>
</feature>
<feature type="binding site" evidence="1">
    <location>
        <begin position="82"/>
        <end position="92"/>
    </location>
    <ligand>
        <name>ATP</name>
        <dbReference type="ChEBI" id="CHEBI:30616"/>
    </ligand>
</feature>
<protein>
    <recommendedName>
        <fullName evidence="1">Homoserine kinase</fullName>
        <shortName evidence="1">HK</shortName>
        <shortName evidence="1">HSK</shortName>
        <ecNumber evidence="1">2.7.1.39</ecNumber>
    </recommendedName>
</protein>
<comment type="function">
    <text evidence="1">Catalyzes the ATP-dependent phosphorylation of L-homoserine to L-homoserine phosphate.</text>
</comment>
<comment type="catalytic activity">
    <reaction evidence="1">
        <text>L-homoserine + ATP = O-phospho-L-homoserine + ADP + H(+)</text>
        <dbReference type="Rhea" id="RHEA:13985"/>
        <dbReference type="ChEBI" id="CHEBI:15378"/>
        <dbReference type="ChEBI" id="CHEBI:30616"/>
        <dbReference type="ChEBI" id="CHEBI:57476"/>
        <dbReference type="ChEBI" id="CHEBI:57590"/>
        <dbReference type="ChEBI" id="CHEBI:456216"/>
        <dbReference type="EC" id="2.7.1.39"/>
    </reaction>
</comment>
<comment type="pathway">
    <text evidence="1">Amino-acid biosynthesis; L-threonine biosynthesis; L-threonine from L-aspartate: step 4/5.</text>
</comment>
<comment type="subcellular location">
    <subcellularLocation>
        <location evidence="1">Cytoplasm</location>
    </subcellularLocation>
</comment>
<comment type="similarity">
    <text evidence="1">Belongs to the GHMP kinase family. Homoserine kinase subfamily.</text>
</comment>
<dbReference type="EC" id="2.7.1.39" evidence="1"/>
<dbReference type="EMBL" id="AM114193">
    <property type="protein sequence ID" value="CAJ37269.1"/>
    <property type="molecule type" value="Genomic_DNA"/>
</dbReference>
<dbReference type="RefSeq" id="WP_012035307.1">
    <property type="nucleotide sequence ID" value="NC_009464.1"/>
</dbReference>
<dbReference type="SMR" id="Q0W2X4"/>
<dbReference type="STRING" id="351160.RCIX2142"/>
<dbReference type="GeneID" id="5143840"/>
<dbReference type="KEGG" id="rci:RCIX2142"/>
<dbReference type="PATRIC" id="fig|351160.9.peg.1012"/>
<dbReference type="eggNOG" id="arCOG01027">
    <property type="taxonomic scope" value="Archaea"/>
</dbReference>
<dbReference type="OrthoDB" id="28273at2157"/>
<dbReference type="UniPathway" id="UPA00050">
    <property type="reaction ID" value="UER00064"/>
</dbReference>
<dbReference type="Proteomes" id="UP000000663">
    <property type="component" value="Chromosome"/>
</dbReference>
<dbReference type="GO" id="GO:0005737">
    <property type="term" value="C:cytoplasm"/>
    <property type="evidence" value="ECO:0007669"/>
    <property type="project" value="UniProtKB-SubCell"/>
</dbReference>
<dbReference type="GO" id="GO:0005524">
    <property type="term" value="F:ATP binding"/>
    <property type="evidence" value="ECO:0007669"/>
    <property type="project" value="UniProtKB-UniRule"/>
</dbReference>
<dbReference type="GO" id="GO:0004413">
    <property type="term" value="F:homoserine kinase activity"/>
    <property type="evidence" value="ECO:0007669"/>
    <property type="project" value="UniProtKB-UniRule"/>
</dbReference>
<dbReference type="GO" id="GO:0009088">
    <property type="term" value="P:threonine biosynthetic process"/>
    <property type="evidence" value="ECO:0007669"/>
    <property type="project" value="UniProtKB-UniRule"/>
</dbReference>
<dbReference type="Gene3D" id="3.30.230.10">
    <property type="match status" value="1"/>
</dbReference>
<dbReference type="Gene3D" id="3.30.70.890">
    <property type="entry name" value="GHMP kinase, C-terminal domain"/>
    <property type="match status" value="1"/>
</dbReference>
<dbReference type="HAMAP" id="MF_00384">
    <property type="entry name" value="Homoser_kinase"/>
    <property type="match status" value="1"/>
</dbReference>
<dbReference type="InterPro" id="IPR013750">
    <property type="entry name" value="GHMP_kinase_C_dom"/>
</dbReference>
<dbReference type="InterPro" id="IPR036554">
    <property type="entry name" value="GHMP_kinase_C_sf"/>
</dbReference>
<dbReference type="InterPro" id="IPR006204">
    <property type="entry name" value="GHMP_kinase_N_dom"/>
</dbReference>
<dbReference type="InterPro" id="IPR000870">
    <property type="entry name" value="Homoserine_kinase"/>
</dbReference>
<dbReference type="InterPro" id="IPR020568">
    <property type="entry name" value="Ribosomal_Su5_D2-typ_SF"/>
</dbReference>
<dbReference type="InterPro" id="IPR014721">
    <property type="entry name" value="Ribsml_uS5_D2-typ_fold_subgr"/>
</dbReference>
<dbReference type="NCBIfam" id="NF002288">
    <property type="entry name" value="PRK01212.1-4"/>
    <property type="match status" value="1"/>
</dbReference>
<dbReference type="NCBIfam" id="TIGR00191">
    <property type="entry name" value="thrB"/>
    <property type="match status" value="1"/>
</dbReference>
<dbReference type="PANTHER" id="PTHR20861:SF1">
    <property type="entry name" value="HOMOSERINE KINASE"/>
    <property type="match status" value="1"/>
</dbReference>
<dbReference type="PANTHER" id="PTHR20861">
    <property type="entry name" value="HOMOSERINE/4-DIPHOSPHOCYTIDYL-2-C-METHYL-D-ERYTHRITOL KINASE"/>
    <property type="match status" value="1"/>
</dbReference>
<dbReference type="Pfam" id="PF08544">
    <property type="entry name" value="GHMP_kinases_C"/>
    <property type="match status" value="1"/>
</dbReference>
<dbReference type="Pfam" id="PF00288">
    <property type="entry name" value="GHMP_kinases_N"/>
    <property type="match status" value="1"/>
</dbReference>
<dbReference type="PIRSF" id="PIRSF000676">
    <property type="entry name" value="Homoser_kin"/>
    <property type="match status" value="1"/>
</dbReference>
<dbReference type="PRINTS" id="PR00958">
    <property type="entry name" value="HOMSERKINASE"/>
</dbReference>
<dbReference type="SUPFAM" id="SSF55060">
    <property type="entry name" value="GHMP Kinase, C-terminal domain"/>
    <property type="match status" value="1"/>
</dbReference>
<dbReference type="SUPFAM" id="SSF54211">
    <property type="entry name" value="Ribosomal protein S5 domain 2-like"/>
    <property type="match status" value="1"/>
</dbReference>
<evidence type="ECO:0000255" key="1">
    <source>
        <dbReference type="HAMAP-Rule" id="MF_00384"/>
    </source>
</evidence>
<gene>
    <name evidence="1" type="primary">thrB</name>
    <name type="ordered locus">UNCMA_09790</name>
    <name type="ORF">RCIX2142</name>
</gene>
<accession>Q0W2X4</accession>
<name>KHSE_METAR</name>
<proteinExistence type="inferred from homology"/>
<keyword id="KW-0028">Amino-acid biosynthesis</keyword>
<keyword id="KW-0067">ATP-binding</keyword>
<keyword id="KW-0963">Cytoplasm</keyword>
<keyword id="KW-0418">Kinase</keyword>
<keyword id="KW-0547">Nucleotide-binding</keyword>
<keyword id="KW-1185">Reference proteome</keyword>
<keyword id="KW-0791">Threonine biosynthesis</keyword>
<keyword id="KW-0808">Transferase</keyword>
<organism>
    <name type="scientific">Methanocella arvoryzae (strain DSM 22066 / NBRC 105507 / MRE50)</name>
    <dbReference type="NCBI Taxonomy" id="351160"/>
    <lineage>
        <taxon>Archaea</taxon>
        <taxon>Methanobacteriati</taxon>
        <taxon>Methanobacteriota</taxon>
        <taxon>Stenosarchaea group</taxon>
        <taxon>Methanomicrobia</taxon>
        <taxon>Methanocellales</taxon>
        <taxon>Methanocellaceae</taxon>
        <taxon>Methanocella</taxon>
    </lineage>
</organism>
<sequence length="300" mass="31169">MDSITVKASATSANLGAGFDVMGIALESPGDIIRVEKADELSIVVKGRGAEGIPADPEKNTAGLVALAMDKKVRITIKSGIRPGSGLGSSAAPAAGTAVAINELFSLGYSKEELVWIAARGEMAAAGIVHADNVAPCIMGGLTLVCNNYVEHVELPPMGVVAVLPEIVVSTKSARGILPQQVPLQEMVLNVSKAAMLMAGVVKKDPVIIGRSLSDTFNEKYRSPLIKGYGSVREAALDSGAYGVAISGSGPTMLALCPEDRSFDVAAAMRKKFEEAGVVSEAYVTCIGKGVRIINRDEEE</sequence>
<reference key="1">
    <citation type="journal article" date="2006" name="Science">
        <title>Genome of rice cluster I archaea -- the key methane producers in the rice rhizosphere.</title>
        <authorList>
            <person name="Erkel C."/>
            <person name="Kube M."/>
            <person name="Reinhardt R."/>
            <person name="Liesack W."/>
        </authorList>
    </citation>
    <scope>NUCLEOTIDE SEQUENCE [LARGE SCALE GENOMIC DNA]</scope>
    <source>
        <strain>DSM 22066 / NBRC 105507 / MRE50</strain>
    </source>
</reference>